<sequence>MNTALAQQIANEGGVEAWMIAQQHKSLLRFLTCGSVDDGKSTLIGRLLHDTRQIYEDQLSSLHNDSKRHGTQGEKLDLALLVDGLQAEREQGITIDVAYRYFSTEKRKFIIADTPGHEQYTRNMATGASTCELAILLIDARKGVLDQTRRHSFISTLLGIKHLVVAINKMDLVDYSEETFTRIREDYLTFAEQLPGNLDIRFVPLSALEGDNVASQSESMPWYSGPTLLEVLETVEIQRVVDAQPMRFPVQYVNRPNLDFRGYAGTLASGRVEVGQRVKVLPSGVESNVARIVTFDGDREEAFAGEAITLVLTDEIDISRGDLLLAADEALPAVQSASVDVVWMAEQPLSPGQSYDIKIAGKKTRARVDGIRYQVDINNLTQREVENLPLNGIGLVDLTFDEPLVLDRYQQNPVTGGLIFIDRLSNVTVGAGMVHEPVSQATAAPSEFSAFELELNALVRRHFPHWGARDLLGDK</sequence>
<reference key="1">
    <citation type="journal article" date="2009" name="PLoS Genet.">
        <title>Organised genome dynamics in the Escherichia coli species results in highly diverse adaptive paths.</title>
        <authorList>
            <person name="Touchon M."/>
            <person name="Hoede C."/>
            <person name="Tenaillon O."/>
            <person name="Barbe V."/>
            <person name="Baeriswyl S."/>
            <person name="Bidet P."/>
            <person name="Bingen E."/>
            <person name="Bonacorsi S."/>
            <person name="Bouchier C."/>
            <person name="Bouvet O."/>
            <person name="Calteau A."/>
            <person name="Chiapello H."/>
            <person name="Clermont O."/>
            <person name="Cruveiller S."/>
            <person name="Danchin A."/>
            <person name="Diard M."/>
            <person name="Dossat C."/>
            <person name="Karoui M.E."/>
            <person name="Frapy E."/>
            <person name="Garry L."/>
            <person name="Ghigo J.M."/>
            <person name="Gilles A.M."/>
            <person name="Johnson J."/>
            <person name="Le Bouguenec C."/>
            <person name="Lescat M."/>
            <person name="Mangenot S."/>
            <person name="Martinez-Jehanne V."/>
            <person name="Matic I."/>
            <person name="Nassif X."/>
            <person name="Oztas S."/>
            <person name="Petit M.A."/>
            <person name="Pichon C."/>
            <person name="Rouy Z."/>
            <person name="Ruf C.S."/>
            <person name="Schneider D."/>
            <person name="Tourret J."/>
            <person name="Vacherie B."/>
            <person name="Vallenet D."/>
            <person name="Medigue C."/>
            <person name="Rocha E.P.C."/>
            <person name="Denamur E."/>
        </authorList>
    </citation>
    <scope>NUCLEOTIDE SEQUENCE [LARGE SCALE GENOMIC DNA]</scope>
    <source>
        <strain>IAI1</strain>
    </source>
</reference>
<protein>
    <recommendedName>
        <fullName evidence="2">Sulfate adenylyltransferase subunit 1</fullName>
        <ecNumber evidence="2">2.7.7.4</ecNumber>
    </recommendedName>
    <alternativeName>
        <fullName evidence="2">ATP-sulfurylase large subunit</fullName>
    </alternativeName>
    <alternativeName>
        <fullName evidence="2">Sulfate adenylate transferase</fullName>
        <shortName evidence="2">SAT</shortName>
    </alternativeName>
</protein>
<name>CYSN_ECO8A</name>
<evidence type="ECO:0000250" key="1"/>
<evidence type="ECO:0000255" key="2">
    <source>
        <dbReference type="HAMAP-Rule" id="MF_00062"/>
    </source>
</evidence>
<organism>
    <name type="scientific">Escherichia coli O8 (strain IAI1)</name>
    <dbReference type="NCBI Taxonomy" id="585034"/>
    <lineage>
        <taxon>Bacteria</taxon>
        <taxon>Pseudomonadati</taxon>
        <taxon>Pseudomonadota</taxon>
        <taxon>Gammaproteobacteria</taxon>
        <taxon>Enterobacterales</taxon>
        <taxon>Enterobacteriaceae</taxon>
        <taxon>Escherichia</taxon>
    </lineage>
</organism>
<proteinExistence type="inferred from homology"/>
<keyword id="KW-0067">ATP-binding</keyword>
<keyword id="KW-0342">GTP-binding</keyword>
<keyword id="KW-0547">Nucleotide-binding</keyword>
<keyword id="KW-0548">Nucleotidyltransferase</keyword>
<keyword id="KW-0808">Transferase</keyword>
<gene>
    <name evidence="2" type="primary">cysN</name>
    <name type="ordered locus">ECIAI1_2853</name>
</gene>
<comment type="function">
    <text evidence="2">With CysD forms the ATP sulfurylase (ATPS) that catalyzes the adenylation of sulfate producing adenosine 5'-phosphosulfate (APS) and diphosphate, the first enzymatic step in sulfur assimilation pathway. APS synthesis involves the formation of a high-energy phosphoric-sulfuric acid anhydride bond driven by GTP hydrolysis by CysN coupled to ATP hydrolysis by CysD.</text>
</comment>
<comment type="catalytic activity">
    <reaction evidence="2">
        <text>sulfate + ATP + H(+) = adenosine 5'-phosphosulfate + diphosphate</text>
        <dbReference type="Rhea" id="RHEA:18133"/>
        <dbReference type="ChEBI" id="CHEBI:15378"/>
        <dbReference type="ChEBI" id="CHEBI:16189"/>
        <dbReference type="ChEBI" id="CHEBI:30616"/>
        <dbReference type="ChEBI" id="CHEBI:33019"/>
        <dbReference type="ChEBI" id="CHEBI:58243"/>
        <dbReference type="EC" id="2.7.7.4"/>
    </reaction>
</comment>
<comment type="pathway">
    <text evidence="2">Sulfur metabolism; hydrogen sulfide biosynthesis; sulfite from sulfate: step 1/3.</text>
</comment>
<comment type="subunit">
    <text evidence="2">Heterodimer composed of CysD, the smaller subunit, and CysN.</text>
</comment>
<comment type="similarity">
    <text evidence="2">Belongs to the TRAFAC class translation factor GTPase superfamily. Classic translation factor GTPase family. CysN/NodQ subfamily.</text>
</comment>
<dbReference type="EC" id="2.7.7.4" evidence="2"/>
<dbReference type="EMBL" id="CU928160">
    <property type="protein sequence ID" value="CAQ99675.1"/>
    <property type="molecule type" value="Genomic_DNA"/>
</dbReference>
<dbReference type="RefSeq" id="WP_001090348.1">
    <property type="nucleotide sequence ID" value="NC_011741.1"/>
</dbReference>
<dbReference type="SMR" id="B7LXG3"/>
<dbReference type="KEGG" id="ecr:ECIAI1_2853"/>
<dbReference type="HOGENOM" id="CLU_007265_5_2_6"/>
<dbReference type="UniPathway" id="UPA00140">
    <property type="reaction ID" value="UER00204"/>
</dbReference>
<dbReference type="GO" id="GO:0005524">
    <property type="term" value="F:ATP binding"/>
    <property type="evidence" value="ECO:0007669"/>
    <property type="project" value="UniProtKB-KW"/>
</dbReference>
<dbReference type="GO" id="GO:0005525">
    <property type="term" value="F:GTP binding"/>
    <property type="evidence" value="ECO:0007669"/>
    <property type="project" value="UniProtKB-UniRule"/>
</dbReference>
<dbReference type="GO" id="GO:0003924">
    <property type="term" value="F:GTPase activity"/>
    <property type="evidence" value="ECO:0007669"/>
    <property type="project" value="InterPro"/>
</dbReference>
<dbReference type="GO" id="GO:0004781">
    <property type="term" value="F:sulfate adenylyltransferase (ATP) activity"/>
    <property type="evidence" value="ECO:0007669"/>
    <property type="project" value="UniProtKB-UniRule"/>
</dbReference>
<dbReference type="GO" id="GO:0070814">
    <property type="term" value="P:hydrogen sulfide biosynthetic process"/>
    <property type="evidence" value="ECO:0007669"/>
    <property type="project" value="UniProtKB-UniRule"/>
</dbReference>
<dbReference type="GO" id="GO:0000103">
    <property type="term" value="P:sulfate assimilation"/>
    <property type="evidence" value="ECO:0007669"/>
    <property type="project" value="UniProtKB-UniRule"/>
</dbReference>
<dbReference type="CDD" id="cd04166">
    <property type="entry name" value="CysN_ATPS"/>
    <property type="match status" value="1"/>
</dbReference>
<dbReference type="CDD" id="cd03695">
    <property type="entry name" value="CysN_NodQ_II"/>
    <property type="match status" value="1"/>
</dbReference>
<dbReference type="CDD" id="cd04095">
    <property type="entry name" value="CysN_NoDQ_III"/>
    <property type="match status" value="1"/>
</dbReference>
<dbReference type="FunFam" id="2.40.30.10:FF:000027">
    <property type="entry name" value="Sulfate adenylyltransferase subunit 1"/>
    <property type="match status" value="1"/>
</dbReference>
<dbReference type="FunFam" id="2.40.30.10:FF:000031">
    <property type="entry name" value="Sulfate adenylyltransferase subunit 1"/>
    <property type="match status" value="1"/>
</dbReference>
<dbReference type="FunFam" id="3.40.50.300:FF:000119">
    <property type="entry name" value="Sulfate adenylyltransferase subunit 1"/>
    <property type="match status" value="1"/>
</dbReference>
<dbReference type="Gene3D" id="3.40.50.300">
    <property type="entry name" value="P-loop containing nucleotide triphosphate hydrolases"/>
    <property type="match status" value="1"/>
</dbReference>
<dbReference type="Gene3D" id="2.40.30.10">
    <property type="entry name" value="Translation factors"/>
    <property type="match status" value="2"/>
</dbReference>
<dbReference type="HAMAP" id="MF_00062">
    <property type="entry name" value="Sulf_adenylyltr_sub1"/>
    <property type="match status" value="1"/>
</dbReference>
<dbReference type="InterPro" id="IPR041757">
    <property type="entry name" value="CysN_GTP-bd"/>
</dbReference>
<dbReference type="InterPro" id="IPR044138">
    <property type="entry name" value="CysN_II"/>
</dbReference>
<dbReference type="InterPro" id="IPR044139">
    <property type="entry name" value="CysN_NoDQ_III"/>
</dbReference>
<dbReference type="InterPro" id="IPR031157">
    <property type="entry name" value="G_TR_CS"/>
</dbReference>
<dbReference type="InterPro" id="IPR054696">
    <property type="entry name" value="GTP-eEF1A_C"/>
</dbReference>
<dbReference type="InterPro" id="IPR027417">
    <property type="entry name" value="P-loop_NTPase"/>
</dbReference>
<dbReference type="InterPro" id="IPR005225">
    <property type="entry name" value="Small_GTP-bd"/>
</dbReference>
<dbReference type="InterPro" id="IPR011779">
    <property type="entry name" value="SO4_adenylTrfase_lsu"/>
</dbReference>
<dbReference type="InterPro" id="IPR000795">
    <property type="entry name" value="T_Tr_GTP-bd_dom"/>
</dbReference>
<dbReference type="InterPro" id="IPR050100">
    <property type="entry name" value="TRAFAC_GTPase_members"/>
</dbReference>
<dbReference type="InterPro" id="IPR009000">
    <property type="entry name" value="Transl_B-barrel_sf"/>
</dbReference>
<dbReference type="InterPro" id="IPR009001">
    <property type="entry name" value="Transl_elong_EF1A/Init_IF2_C"/>
</dbReference>
<dbReference type="NCBIfam" id="TIGR02034">
    <property type="entry name" value="CysN"/>
    <property type="match status" value="1"/>
</dbReference>
<dbReference type="NCBIfam" id="NF003478">
    <property type="entry name" value="PRK05124.1"/>
    <property type="match status" value="1"/>
</dbReference>
<dbReference type="NCBIfam" id="TIGR00231">
    <property type="entry name" value="small_GTP"/>
    <property type="match status" value="1"/>
</dbReference>
<dbReference type="PANTHER" id="PTHR23115">
    <property type="entry name" value="TRANSLATION FACTOR"/>
    <property type="match status" value="1"/>
</dbReference>
<dbReference type="Pfam" id="PF22594">
    <property type="entry name" value="GTP-eEF1A_C"/>
    <property type="match status" value="1"/>
</dbReference>
<dbReference type="Pfam" id="PF00009">
    <property type="entry name" value="GTP_EFTU"/>
    <property type="match status" value="1"/>
</dbReference>
<dbReference type="PRINTS" id="PR00315">
    <property type="entry name" value="ELONGATNFCT"/>
</dbReference>
<dbReference type="SUPFAM" id="SSF50465">
    <property type="entry name" value="EF-Tu/eEF-1alpha/eIF2-gamma C-terminal domain"/>
    <property type="match status" value="1"/>
</dbReference>
<dbReference type="SUPFAM" id="SSF52540">
    <property type="entry name" value="P-loop containing nucleoside triphosphate hydrolases"/>
    <property type="match status" value="1"/>
</dbReference>
<dbReference type="SUPFAM" id="SSF50447">
    <property type="entry name" value="Translation proteins"/>
    <property type="match status" value="1"/>
</dbReference>
<dbReference type="PROSITE" id="PS00301">
    <property type="entry name" value="G_TR_1"/>
    <property type="match status" value="1"/>
</dbReference>
<dbReference type="PROSITE" id="PS51722">
    <property type="entry name" value="G_TR_2"/>
    <property type="match status" value="1"/>
</dbReference>
<feature type="chain" id="PRO_1000116939" description="Sulfate adenylyltransferase subunit 1">
    <location>
        <begin position="1"/>
        <end position="475"/>
    </location>
</feature>
<feature type="domain" description="tr-type G">
    <location>
        <begin position="25"/>
        <end position="239"/>
    </location>
</feature>
<feature type="region of interest" description="G1" evidence="1">
    <location>
        <begin position="34"/>
        <end position="41"/>
    </location>
</feature>
<feature type="region of interest" description="G2" evidence="1">
    <location>
        <begin position="92"/>
        <end position="96"/>
    </location>
</feature>
<feature type="region of interest" description="G3" evidence="1">
    <location>
        <begin position="113"/>
        <end position="116"/>
    </location>
</feature>
<feature type="region of interest" description="G4" evidence="1">
    <location>
        <begin position="168"/>
        <end position="171"/>
    </location>
</feature>
<feature type="region of interest" description="G5" evidence="1">
    <location>
        <begin position="206"/>
        <end position="208"/>
    </location>
</feature>
<feature type="binding site" evidence="2">
    <location>
        <begin position="34"/>
        <end position="41"/>
    </location>
    <ligand>
        <name>GTP</name>
        <dbReference type="ChEBI" id="CHEBI:37565"/>
    </ligand>
</feature>
<feature type="binding site" evidence="2">
    <location>
        <begin position="113"/>
        <end position="117"/>
    </location>
    <ligand>
        <name>GTP</name>
        <dbReference type="ChEBI" id="CHEBI:37565"/>
    </ligand>
</feature>
<feature type="binding site" evidence="2">
    <location>
        <begin position="168"/>
        <end position="171"/>
    </location>
    <ligand>
        <name>GTP</name>
        <dbReference type="ChEBI" id="CHEBI:37565"/>
    </ligand>
</feature>
<accession>B7LXG3</accession>